<comment type="function">
    <text evidence="1">Is essential for L-lactate degradation and allows cells to grow with lactate as the sole carbon source. May also allow cells to utilize an alternative carbon source during biofilm formation, since it contributes to the formation of architecturally complex communities when lactate is present.</text>
</comment>
<comment type="induction">
    <text evidence="1">Is under the dual control of the transcriptional repressors LutR and SinR, which allows the lutABC operon to be induced during both growth in liquid culture and biofilm formation. Is induced by L-lactate, which relieves LutR repression.</text>
</comment>
<comment type="disruption phenotype">
    <text evidence="1">Cells lacking this gene are unable to grow on minimal medium with L-lactate as the sole carbon source. Cells lacking the lutABC operon exhibit little or no defect in biofilm formation on MSgg medium, but form small colonies that almost completely lacked surface architecture when glycerol is replaced with L-lactate in the MSgg medium.</text>
</comment>
<comment type="similarity">
    <text evidence="2">Belongs to the LutC/YkgG family.</text>
</comment>
<feature type="chain" id="PRO_0000360219" description="Lactate utilization protein C">
    <location>
        <begin position="1"/>
        <end position="240"/>
    </location>
</feature>
<accession>O32259</accession>
<dbReference type="EMBL" id="AL009126">
    <property type="protein sequence ID" value="CAB15408.1"/>
    <property type="molecule type" value="Genomic_DNA"/>
</dbReference>
<dbReference type="PIR" id="A70031">
    <property type="entry name" value="A70031"/>
</dbReference>
<dbReference type="RefSeq" id="NP_391283.1">
    <property type="nucleotide sequence ID" value="NC_000964.3"/>
</dbReference>
<dbReference type="RefSeq" id="WP_003228309.1">
    <property type="nucleotide sequence ID" value="NZ_OZ025638.1"/>
</dbReference>
<dbReference type="SMR" id="O32259"/>
<dbReference type="FunCoup" id="O32259">
    <property type="interactions" value="7"/>
</dbReference>
<dbReference type="IntAct" id="O32259">
    <property type="interactions" value="1"/>
</dbReference>
<dbReference type="MINT" id="O32259"/>
<dbReference type="STRING" id="224308.BSU34030"/>
<dbReference type="jPOST" id="O32259"/>
<dbReference type="PaxDb" id="224308-BSU34030"/>
<dbReference type="EnsemblBacteria" id="CAB15408">
    <property type="protein sequence ID" value="CAB15408"/>
    <property type="gene ID" value="BSU_34030"/>
</dbReference>
<dbReference type="GeneID" id="937742"/>
<dbReference type="KEGG" id="bsu:BSU34030"/>
<dbReference type="PATRIC" id="fig|224308.179.peg.3689"/>
<dbReference type="eggNOG" id="COG1556">
    <property type="taxonomic scope" value="Bacteria"/>
</dbReference>
<dbReference type="InParanoid" id="O32259"/>
<dbReference type="OrthoDB" id="9794157at2"/>
<dbReference type="PhylomeDB" id="O32259"/>
<dbReference type="BioCyc" id="BSUB:BSU34030-MONOMER"/>
<dbReference type="BioCyc" id="MetaCyc:BSU34030-MONOMER"/>
<dbReference type="Proteomes" id="UP000001570">
    <property type="component" value="Chromosome"/>
</dbReference>
<dbReference type="GO" id="GO:0006089">
    <property type="term" value="P:lactate metabolic process"/>
    <property type="evidence" value="ECO:0007669"/>
    <property type="project" value="UniProtKB-UniRule"/>
</dbReference>
<dbReference type="Gene3D" id="3.40.50.10420">
    <property type="entry name" value="NagB/RpiA/CoA transferase-like"/>
    <property type="match status" value="1"/>
</dbReference>
<dbReference type="HAMAP" id="MF_02104">
    <property type="entry name" value="LutC"/>
    <property type="match status" value="1"/>
</dbReference>
<dbReference type="InterPro" id="IPR024185">
    <property type="entry name" value="FTHF_cligase-like_sf"/>
</dbReference>
<dbReference type="InterPro" id="IPR003741">
    <property type="entry name" value="LUD_dom"/>
</dbReference>
<dbReference type="InterPro" id="IPR022823">
    <property type="entry name" value="LutC"/>
</dbReference>
<dbReference type="InterPro" id="IPR037171">
    <property type="entry name" value="NagB/RpiA_transferase-like"/>
</dbReference>
<dbReference type="PANTHER" id="PTHR43682">
    <property type="entry name" value="LACTATE UTILIZATION PROTEIN C"/>
    <property type="match status" value="1"/>
</dbReference>
<dbReference type="PANTHER" id="PTHR43682:SF1">
    <property type="entry name" value="LACTATE UTILIZATION PROTEIN C"/>
    <property type="match status" value="1"/>
</dbReference>
<dbReference type="Pfam" id="PF02589">
    <property type="entry name" value="LUD_dom"/>
    <property type="match status" value="1"/>
</dbReference>
<dbReference type="SUPFAM" id="SSF100950">
    <property type="entry name" value="NagB/RpiA/CoA transferase-like"/>
    <property type="match status" value="1"/>
</dbReference>
<sequence length="240" mass="26277">MTKGTIQNQESFLNRIASSLGRERRTGGVAVPEWAHQPQYKTLEGYSADDLVTVLKNHCVKIHTELIETDSTGLYDALREQVSRFSGGPVIIPKDPRFEEYGLKSLLTKDWPSEGTPVWEWDADKGEENIKKAEQANVGITFSEITLAESGTVVLFSSKDIGRSVSLLPTTYIAIVPKSSIVPRMTQASDIIRQNIANGVTVPSCINYITGPSNSADIEMDLVVGVHGPVKAAYILVSDR</sequence>
<protein>
    <recommendedName>
        <fullName>Lactate utilization protein C</fullName>
    </recommendedName>
</protein>
<keyword id="KW-1185">Reference proteome</keyword>
<name>LUTC_BACSU</name>
<proteinExistence type="evidence at protein level"/>
<reference key="1">
    <citation type="journal article" date="1997" name="Nature">
        <title>The complete genome sequence of the Gram-positive bacterium Bacillus subtilis.</title>
        <authorList>
            <person name="Kunst F."/>
            <person name="Ogasawara N."/>
            <person name="Moszer I."/>
            <person name="Albertini A.M."/>
            <person name="Alloni G."/>
            <person name="Azevedo V."/>
            <person name="Bertero M.G."/>
            <person name="Bessieres P."/>
            <person name="Bolotin A."/>
            <person name="Borchert S."/>
            <person name="Borriss R."/>
            <person name="Boursier L."/>
            <person name="Brans A."/>
            <person name="Braun M."/>
            <person name="Brignell S.C."/>
            <person name="Bron S."/>
            <person name="Brouillet S."/>
            <person name="Bruschi C.V."/>
            <person name="Caldwell B."/>
            <person name="Capuano V."/>
            <person name="Carter N.M."/>
            <person name="Choi S.-K."/>
            <person name="Codani J.-J."/>
            <person name="Connerton I.F."/>
            <person name="Cummings N.J."/>
            <person name="Daniel R.A."/>
            <person name="Denizot F."/>
            <person name="Devine K.M."/>
            <person name="Duesterhoeft A."/>
            <person name="Ehrlich S.D."/>
            <person name="Emmerson P.T."/>
            <person name="Entian K.-D."/>
            <person name="Errington J."/>
            <person name="Fabret C."/>
            <person name="Ferrari E."/>
            <person name="Foulger D."/>
            <person name="Fritz C."/>
            <person name="Fujita M."/>
            <person name="Fujita Y."/>
            <person name="Fuma S."/>
            <person name="Galizzi A."/>
            <person name="Galleron N."/>
            <person name="Ghim S.-Y."/>
            <person name="Glaser P."/>
            <person name="Goffeau A."/>
            <person name="Golightly E.J."/>
            <person name="Grandi G."/>
            <person name="Guiseppi G."/>
            <person name="Guy B.J."/>
            <person name="Haga K."/>
            <person name="Haiech J."/>
            <person name="Harwood C.R."/>
            <person name="Henaut A."/>
            <person name="Hilbert H."/>
            <person name="Holsappel S."/>
            <person name="Hosono S."/>
            <person name="Hullo M.-F."/>
            <person name="Itaya M."/>
            <person name="Jones L.-M."/>
            <person name="Joris B."/>
            <person name="Karamata D."/>
            <person name="Kasahara Y."/>
            <person name="Klaerr-Blanchard M."/>
            <person name="Klein C."/>
            <person name="Kobayashi Y."/>
            <person name="Koetter P."/>
            <person name="Koningstein G."/>
            <person name="Krogh S."/>
            <person name="Kumano M."/>
            <person name="Kurita K."/>
            <person name="Lapidus A."/>
            <person name="Lardinois S."/>
            <person name="Lauber J."/>
            <person name="Lazarevic V."/>
            <person name="Lee S.-M."/>
            <person name="Levine A."/>
            <person name="Liu H."/>
            <person name="Masuda S."/>
            <person name="Mauel C."/>
            <person name="Medigue C."/>
            <person name="Medina N."/>
            <person name="Mellado R.P."/>
            <person name="Mizuno M."/>
            <person name="Moestl D."/>
            <person name="Nakai S."/>
            <person name="Noback M."/>
            <person name="Noone D."/>
            <person name="O'Reilly M."/>
            <person name="Ogawa K."/>
            <person name="Ogiwara A."/>
            <person name="Oudega B."/>
            <person name="Park S.-H."/>
            <person name="Parro V."/>
            <person name="Pohl T.M."/>
            <person name="Portetelle D."/>
            <person name="Porwollik S."/>
            <person name="Prescott A.M."/>
            <person name="Presecan E."/>
            <person name="Pujic P."/>
            <person name="Purnelle B."/>
            <person name="Rapoport G."/>
            <person name="Rey M."/>
            <person name="Reynolds S."/>
            <person name="Rieger M."/>
            <person name="Rivolta C."/>
            <person name="Rocha E."/>
            <person name="Roche B."/>
            <person name="Rose M."/>
            <person name="Sadaie Y."/>
            <person name="Sato T."/>
            <person name="Scanlan E."/>
            <person name="Schleich S."/>
            <person name="Schroeter R."/>
            <person name="Scoffone F."/>
            <person name="Sekiguchi J."/>
            <person name="Sekowska A."/>
            <person name="Seror S.J."/>
            <person name="Serror P."/>
            <person name="Shin B.-S."/>
            <person name="Soldo B."/>
            <person name="Sorokin A."/>
            <person name="Tacconi E."/>
            <person name="Takagi T."/>
            <person name="Takahashi H."/>
            <person name="Takemaru K."/>
            <person name="Takeuchi M."/>
            <person name="Tamakoshi A."/>
            <person name="Tanaka T."/>
            <person name="Terpstra P."/>
            <person name="Tognoni A."/>
            <person name="Tosato V."/>
            <person name="Uchiyama S."/>
            <person name="Vandenbol M."/>
            <person name="Vannier F."/>
            <person name="Vassarotti A."/>
            <person name="Viari A."/>
            <person name="Wambutt R."/>
            <person name="Wedler E."/>
            <person name="Wedler H."/>
            <person name="Weitzenegger T."/>
            <person name="Winters P."/>
            <person name="Wipat A."/>
            <person name="Yamamoto H."/>
            <person name="Yamane K."/>
            <person name="Yasumoto K."/>
            <person name="Yata K."/>
            <person name="Yoshida K."/>
            <person name="Yoshikawa H.-F."/>
            <person name="Zumstein E."/>
            <person name="Yoshikawa H."/>
            <person name="Danchin A."/>
        </authorList>
    </citation>
    <scope>NUCLEOTIDE SEQUENCE [LARGE SCALE GENOMIC DNA]</scope>
    <source>
        <strain>168</strain>
    </source>
</reference>
<reference key="2">
    <citation type="journal article" date="2009" name="J. Bacteriol.">
        <title>A widely conserved gene cluster required for lactate utilization in Bacillus subtilis and its involvement in biofilm formation.</title>
        <authorList>
            <person name="Chai Y."/>
            <person name="Kolter R."/>
            <person name="Losick R."/>
        </authorList>
    </citation>
    <scope>FUNCTION IN LACTATE UTILIZATION</scope>
    <scope>INDUCTION</scope>
    <scope>DISRUPTION PHENOTYPE</scope>
    <source>
        <strain>3610</strain>
    </source>
</reference>
<organism>
    <name type="scientific">Bacillus subtilis (strain 168)</name>
    <dbReference type="NCBI Taxonomy" id="224308"/>
    <lineage>
        <taxon>Bacteria</taxon>
        <taxon>Bacillati</taxon>
        <taxon>Bacillota</taxon>
        <taxon>Bacilli</taxon>
        <taxon>Bacillales</taxon>
        <taxon>Bacillaceae</taxon>
        <taxon>Bacillus</taxon>
    </lineage>
</organism>
<gene>
    <name type="primary">lutC</name>
    <name type="synonym">yvbY</name>
    <name type="ordered locus">BSU34030</name>
</gene>
<evidence type="ECO:0000269" key="1">
    <source>
    </source>
</evidence>
<evidence type="ECO:0000305" key="2"/>